<feature type="chain" id="PRO_0000437030" description="Kinesin-like protein KIN-8A">
    <location>
        <begin position="1"/>
        <end position="776"/>
    </location>
</feature>
<feature type="domain" description="Kinesin motor" evidence="2">
    <location>
        <begin position="205"/>
        <end position="534"/>
    </location>
</feature>
<feature type="region of interest" description="Disordered" evidence="3">
    <location>
        <begin position="1"/>
        <end position="31"/>
    </location>
</feature>
<feature type="region of interest" description="Disordered" evidence="3">
    <location>
        <begin position="80"/>
        <end position="135"/>
    </location>
</feature>
<feature type="region of interest" description="Disordered" evidence="3">
    <location>
        <begin position="590"/>
        <end position="611"/>
    </location>
</feature>
<feature type="coiled-coil region" evidence="1">
    <location>
        <begin position="554"/>
        <end position="592"/>
    </location>
</feature>
<feature type="coiled-coil region" evidence="1">
    <location>
        <begin position="634"/>
        <end position="671"/>
    </location>
</feature>
<feature type="compositionally biased region" description="Low complexity" evidence="3">
    <location>
        <begin position="7"/>
        <end position="26"/>
    </location>
</feature>
<feature type="compositionally biased region" description="Pro residues" evidence="3">
    <location>
        <begin position="123"/>
        <end position="132"/>
    </location>
</feature>
<feature type="compositionally biased region" description="Low complexity" evidence="3">
    <location>
        <begin position="593"/>
        <end position="604"/>
    </location>
</feature>
<feature type="binding site" evidence="2">
    <location>
        <begin position="297"/>
        <end position="304"/>
    </location>
    <ligand>
        <name>ATP</name>
        <dbReference type="ChEBI" id="CHEBI:30616"/>
    </ligand>
</feature>
<accession>Q0JLE4</accession>
<accession>A0A0P0V508</accession>
<accession>A2ZV76</accession>
<comment type="similarity">
    <text evidence="4">Belongs to the TRAFAC class myosin-kinesin ATPase superfamily. Kinesin family. KIN-8 subfamily.</text>
</comment>
<comment type="sequence caution" evidence="5">
    <conflict type="erroneous gene model prediction">
        <sequence resource="EMBL-CDS" id="BAF05434"/>
    </conflict>
</comment>
<comment type="sequence caution" evidence="5">
    <conflict type="erroneous gene model prediction">
        <sequence resource="EMBL-CDS" id="EAZ12623"/>
    </conflict>
</comment>
<evidence type="ECO:0000255" key="1"/>
<evidence type="ECO:0000255" key="2">
    <source>
        <dbReference type="PROSITE-ProRule" id="PRU00283"/>
    </source>
</evidence>
<evidence type="ECO:0000256" key="3">
    <source>
        <dbReference type="SAM" id="MobiDB-lite"/>
    </source>
</evidence>
<evidence type="ECO:0000303" key="4">
    <source>
    </source>
</evidence>
<evidence type="ECO:0000305" key="5"/>
<evidence type="ECO:0000312" key="6">
    <source>
        <dbReference type="EMBL" id="BAS73064.1"/>
    </source>
</evidence>
<evidence type="ECO:0000312" key="7">
    <source>
        <dbReference type="EMBL" id="EAZ12623.1"/>
    </source>
</evidence>
<gene>
    <name evidence="5" type="primary">KIN8A</name>
    <name evidence="6" type="ordered locus">Os01g0605500</name>
    <name evidence="5" type="ordered locus">LOC_Os01g42070</name>
    <name evidence="7" type="ORF">OsJ_02534</name>
</gene>
<protein>
    <recommendedName>
        <fullName evidence="5">Kinesin-like protein KIN-8A</fullName>
    </recommendedName>
</protein>
<sequence>MPVSTRASAAGGQPWSSAAPAPASAPGRGGARREILTNHHHHGLKEKMRALTLFYEQHKQQLASSQGGGARGRRSIQYAVGEVGGDENGRNAEEEDDVGRKRHDAVPAAVLRENMAPPEERAPPPPPAPPPKSSHVVVFSRQADPTEKENVSHGGIATMSCPIKKAAPALPAPAARKLSLGGGMAARLKTAGEAGAGNGDAAGSRIMVFVRLRPMSRKEKDAGSRSCVKIVNKKDVYLTEFASETDYLRLKRVRGRHFCFDSSFPDTTTQAEVYSTTTSDLVEGVLQGRNGTVFCYGATGAGKTYTMLGTMESPGVMVLAIKDLFTKVRQRSHDGNHSIQLSYLEVYNETVRDLLSPGRPLLLREDKQGTVAAGLTHYRAYSTDEVMKLLQQGNQNRTTEPTRVNETSSRSHAILQVIVEYRSIDGGSIVTRVGKLSLIDLAGSERALATDQRTQRSIEGANINRSLLALSSCINALVEGKKHIPYRNSKLTQLLKDSLGGSCNTVMIANISPSNLSFGETQNTLHWADRAKEIKTKALTTANEEVLRVTDSETDQAKLVLELQKENSELRQQLARQQQKLLTVQAQTLASNASPQQSPAPSAQISTPCSTQRKVKRSILAGNCFNTPDSKRPAAENAQVRDLQRKVKAMEAEIEKMKKEHLLQLKQKDEFIRDLINRKTSNVPEAATCERRVATRASVRKAQKDAAAAGELRSPSHRFTSPVPTAKKRTFWDIGGNSPSTLAVNGRKTRSHVAAETPKGTSMLLQPGFARQRAIH</sequence>
<proteinExistence type="inferred from homology"/>
<organism>
    <name type="scientific">Oryza sativa subsp. japonica</name>
    <name type="common">Rice</name>
    <dbReference type="NCBI Taxonomy" id="39947"/>
    <lineage>
        <taxon>Eukaryota</taxon>
        <taxon>Viridiplantae</taxon>
        <taxon>Streptophyta</taxon>
        <taxon>Embryophyta</taxon>
        <taxon>Tracheophyta</taxon>
        <taxon>Spermatophyta</taxon>
        <taxon>Magnoliopsida</taxon>
        <taxon>Liliopsida</taxon>
        <taxon>Poales</taxon>
        <taxon>Poaceae</taxon>
        <taxon>BOP clade</taxon>
        <taxon>Oryzoideae</taxon>
        <taxon>Oryzeae</taxon>
        <taxon>Oryzinae</taxon>
        <taxon>Oryza</taxon>
        <taxon>Oryza sativa</taxon>
    </lineage>
</organism>
<name>KN8A_ORYSJ</name>
<dbReference type="EMBL" id="AP008207">
    <property type="protein sequence ID" value="BAF05434.2"/>
    <property type="status" value="ALT_SEQ"/>
    <property type="molecule type" value="Genomic_DNA"/>
</dbReference>
<dbReference type="EMBL" id="AP014957">
    <property type="protein sequence ID" value="BAS73064.1"/>
    <property type="molecule type" value="Genomic_DNA"/>
</dbReference>
<dbReference type="EMBL" id="CM000138">
    <property type="protein sequence ID" value="EAZ12623.1"/>
    <property type="status" value="ALT_SEQ"/>
    <property type="molecule type" value="Genomic_DNA"/>
</dbReference>
<dbReference type="SMR" id="Q0JLE4"/>
<dbReference type="FunCoup" id="Q0JLE4">
    <property type="interactions" value="132"/>
</dbReference>
<dbReference type="STRING" id="39947.Q0JLE4"/>
<dbReference type="PaxDb" id="39947-Q0JLE4"/>
<dbReference type="EnsemblPlants" id="Os01t0605500-00">
    <property type="protein sequence ID" value="Os01t0605500-00"/>
    <property type="gene ID" value="Os01g0605500"/>
</dbReference>
<dbReference type="GeneID" id="4324211"/>
<dbReference type="Gramene" id="Os01t0605500-00">
    <property type="protein sequence ID" value="Os01t0605500-00"/>
    <property type="gene ID" value="Os01g0605500"/>
</dbReference>
<dbReference type="KEGG" id="dosa:Os01g0605500"/>
<dbReference type="KEGG" id="osa:4324211"/>
<dbReference type="eggNOG" id="KOG0242">
    <property type="taxonomic scope" value="Eukaryota"/>
</dbReference>
<dbReference type="HOGENOM" id="CLU_009927_0_0_1"/>
<dbReference type="InParanoid" id="Q0JLE4"/>
<dbReference type="OMA" id="RHFCFDS"/>
<dbReference type="OrthoDB" id="3176171at2759"/>
<dbReference type="Proteomes" id="UP000000763">
    <property type="component" value="Chromosome 1"/>
</dbReference>
<dbReference type="Proteomes" id="UP000007752">
    <property type="component" value="Chromosome 1"/>
</dbReference>
<dbReference type="Proteomes" id="UP000059680">
    <property type="component" value="Chromosome 1"/>
</dbReference>
<dbReference type="GO" id="GO:0005737">
    <property type="term" value="C:cytoplasm"/>
    <property type="evidence" value="ECO:0000318"/>
    <property type="project" value="GO_Central"/>
</dbReference>
<dbReference type="GO" id="GO:0005871">
    <property type="term" value="C:kinesin complex"/>
    <property type="evidence" value="ECO:0000318"/>
    <property type="project" value="GO_Central"/>
</dbReference>
<dbReference type="GO" id="GO:0061673">
    <property type="term" value="C:mitotic spindle astral microtubule"/>
    <property type="evidence" value="ECO:0000318"/>
    <property type="project" value="GO_Central"/>
</dbReference>
<dbReference type="GO" id="GO:1990023">
    <property type="term" value="C:mitotic spindle midzone"/>
    <property type="evidence" value="ECO:0000318"/>
    <property type="project" value="GO_Central"/>
</dbReference>
<dbReference type="GO" id="GO:0005634">
    <property type="term" value="C:nucleus"/>
    <property type="evidence" value="ECO:0000318"/>
    <property type="project" value="GO_Central"/>
</dbReference>
<dbReference type="GO" id="GO:0005524">
    <property type="term" value="F:ATP binding"/>
    <property type="evidence" value="ECO:0007669"/>
    <property type="project" value="UniProtKB-KW"/>
</dbReference>
<dbReference type="GO" id="GO:0016887">
    <property type="term" value="F:ATP hydrolysis activity"/>
    <property type="evidence" value="ECO:0000318"/>
    <property type="project" value="GO_Central"/>
</dbReference>
<dbReference type="GO" id="GO:0008017">
    <property type="term" value="F:microtubule binding"/>
    <property type="evidence" value="ECO:0000318"/>
    <property type="project" value="GO_Central"/>
</dbReference>
<dbReference type="GO" id="GO:0008574">
    <property type="term" value="F:plus-end-directed microtubule motor activity"/>
    <property type="evidence" value="ECO:0000318"/>
    <property type="project" value="GO_Central"/>
</dbReference>
<dbReference type="GO" id="GO:0007019">
    <property type="term" value="P:microtubule depolymerization"/>
    <property type="evidence" value="ECO:0000318"/>
    <property type="project" value="GO_Central"/>
</dbReference>
<dbReference type="GO" id="GO:0007018">
    <property type="term" value="P:microtubule-based movement"/>
    <property type="evidence" value="ECO:0000318"/>
    <property type="project" value="GO_Central"/>
</dbReference>
<dbReference type="GO" id="GO:0000070">
    <property type="term" value="P:mitotic sister chromatid segregation"/>
    <property type="evidence" value="ECO:0000318"/>
    <property type="project" value="GO_Central"/>
</dbReference>
<dbReference type="FunFam" id="3.40.850.10:FF:000054">
    <property type="entry name" value="Kinesin-like protein"/>
    <property type="match status" value="1"/>
</dbReference>
<dbReference type="Gene3D" id="3.40.850.10">
    <property type="entry name" value="Kinesin motor domain"/>
    <property type="match status" value="1"/>
</dbReference>
<dbReference type="InterPro" id="IPR027640">
    <property type="entry name" value="Kinesin-like_fam"/>
</dbReference>
<dbReference type="InterPro" id="IPR019821">
    <property type="entry name" value="Kinesin_motor_CS"/>
</dbReference>
<dbReference type="InterPro" id="IPR001752">
    <property type="entry name" value="Kinesin_motor_dom"/>
</dbReference>
<dbReference type="InterPro" id="IPR036961">
    <property type="entry name" value="Kinesin_motor_dom_sf"/>
</dbReference>
<dbReference type="InterPro" id="IPR027417">
    <property type="entry name" value="P-loop_NTPase"/>
</dbReference>
<dbReference type="PANTHER" id="PTHR47968">
    <property type="entry name" value="CENTROMERE PROTEIN E"/>
    <property type="match status" value="1"/>
</dbReference>
<dbReference type="PANTHER" id="PTHR47968:SF13">
    <property type="entry name" value="KINESIN-LIKE PROTEIN KIF19 ISOFORM X1"/>
    <property type="match status" value="1"/>
</dbReference>
<dbReference type="Pfam" id="PF00225">
    <property type="entry name" value="Kinesin"/>
    <property type="match status" value="1"/>
</dbReference>
<dbReference type="PRINTS" id="PR00380">
    <property type="entry name" value="KINESINHEAVY"/>
</dbReference>
<dbReference type="SMART" id="SM00129">
    <property type="entry name" value="KISc"/>
    <property type="match status" value="1"/>
</dbReference>
<dbReference type="SUPFAM" id="SSF52540">
    <property type="entry name" value="P-loop containing nucleoside triphosphate hydrolases"/>
    <property type="match status" value="1"/>
</dbReference>
<dbReference type="PROSITE" id="PS00411">
    <property type="entry name" value="KINESIN_MOTOR_1"/>
    <property type="match status" value="1"/>
</dbReference>
<dbReference type="PROSITE" id="PS50067">
    <property type="entry name" value="KINESIN_MOTOR_2"/>
    <property type="match status" value="1"/>
</dbReference>
<keyword id="KW-0067">ATP-binding</keyword>
<keyword id="KW-0175">Coiled coil</keyword>
<keyword id="KW-0493">Microtubule</keyword>
<keyword id="KW-0505">Motor protein</keyword>
<keyword id="KW-0547">Nucleotide-binding</keyword>
<keyword id="KW-1185">Reference proteome</keyword>
<reference key="1">
    <citation type="journal article" date="2005" name="Nature">
        <title>The map-based sequence of the rice genome.</title>
        <authorList>
            <consortium name="International rice genome sequencing project (IRGSP)"/>
        </authorList>
    </citation>
    <scope>NUCLEOTIDE SEQUENCE [LARGE SCALE GENOMIC DNA]</scope>
    <source>
        <strain>cv. Nipponbare</strain>
    </source>
</reference>
<reference key="2">
    <citation type="journal article" date="2008" name="Nucleic Acids Res.">
        <title>The rice annotation project database (RAP-DB): 2008 update.</title>
        <authorList>
            <consortium name="The rice annotation project (RAP)"/>
        </authorList>
    </citation>
    <scope>GENOME REANNOTATION</scope>
    <source>
        <strain>cv. Nipponbare</strain>
    </source>
</reference>
<reference key="3">
    <citation type="journal article" date="2013" name="Rice">
        <title>Improvement of the Oryza sativa Nipponbare reference genome using next generation sequence and optical map data.</title>
        <authorList>
            <person name="Kawahara Y."/>
            <person name="de la Bastide M."/>
            <person name="Hamilton J.P."/>
            <person name="Kanamori H."/>
            <person name="McCombie W.R."/>
            <person name="Ouyang S."/>
            <person name="Schwartz D.C."/>
            <person name="Tanaka T."/>
            <person name="Wu J."/>
            <person name="Zhou S."/>
            <person name="Childs K.L."/>
            <person name="Davidson R.M."/>
            <person name="Lin H."/>
            <person name="Quesada-Ocampo L."/>
            <person name="Vaillancourt B."/>
            <person name="Sakai H."/>
            <person name="Lee S.S."/>
            <person name="Kim J."/>
            <person name="Numa H."/>
            <person name="Itoh T."/>
            <person name="Buell C.R."/>
            <person name="Matsumoto T."/>
        </authorList>
    </citation>
    <scope>GENOME REANNOTATION</scope>
    <source>
        <strain>cv. Nipponbare</strain>
    </source>
</reference>
<reference key="4">
    <citation type="journal article" date="2005" name="PLoS Biol.">
        <title>The genomes of Oryza sativa: a history of duplications.</title>
        <authorList>
            <person name="Yu J."/>
            <person name="Wang J."/>
            <person name="Lin W."/>
            <person name="Li S."/>
            <person name="Li H."/>
            <person name="Zhou J."/>
            <person name="Ni P."/>
            <person name="Dong W."/>
            <person name="Hu S."/>
            <person name="Zeng C."/>
            <person name="Zhang J."/>
            <person name="Zhang Y."/>
            <person name="Li R."/>
            <person name="Xu Z."/>
            <person name="Li S."/>
            <person name="Li X."/>
            <person name="Zheng H."/>
            <person name="Cong L."/>
            <person name="Lin L."/>
            <person name="Yin J."/>
            <person name="Geng J."/>
            <person name="Li G."/>
            <person name="Shi J."/>
            <person name="Liu J."/>
            <person name="Lv H."/>
            <person name="Li J."/>
            <person name="Wang J."/>
            <person name="Deng Y."/>
            <person name="Ran L."/>
            <person name="Shi X."/>
            <person name="Wang X."/>
            <person name="Wu Q."/>
            <person name="Li C."/>
            <person name="Ren X."/>
            <person name="Wang J."/>
            <person name="Wang X."/>
            <person name="Li D."/>
            <person name="Liu D."/>
            <person name="Zhang X."/>
            <person name="Ji Z."/>
            <person name="Zhao W."/>
            <person name="Sun Y."/>
            <person name="Zhang Z."/>
            <person name="Bao J."/>
            <person name="Han Y."/>
            <person name="Dong L."/>
            <person name="Ji J."/>
            <person name="Chen P."/>
            <person name="Wu S."/>
            <person name="Liu J."/>
            <person name="Xiao Y."/>
            <person name="Bu D."/>
            <person name="Tan J."/>
            <person name="Yang L."/>
            <person name="Ye C."/>
            <person name="Zhang J."/>
            <person name="Xu J."/>
            <person name="Zhou Y."/>
            <person name="Yu Y."/>
            <person name="Zhang B."/>
            <person name="Zhuang S."/>
            <person name="Wei H."/>
            <person name="Liu B."/>
            <person name="Lei M."/>
            <person name="Yu H."/>
            <person name="Li Y."/>
            <person name="Xu H."/>
            <person name="Wei S."/>
            <person name="He X."/>
            <person name="Fang L."/>
            <person name="Zhang Z."/>
            <person name="Zhang Y."/>
            <person name="Huang X."/>
            <person name="Su Z."/>
            <person name="Tong W."/>
            <person name="Li J."/>
            <person name="Tong Z."/>
            <person name="Li S."/>
            <person name="Ye J."/>
            <person name="Wang L."/>
            <person name="Fang L."/>
            <person name="Lei T."/>
            <person name="Chen C.-S."/>
            <person name="Chen H.-C."/>
            <person name="Xu Z."/>
            <person name="Li H."/>
            <person name="Huang H."/>
            <person name="Zhang F."/>
            <person name="Xu H."/>
            <person name="Li N."/>
            <person name="Zhao C."/>
            <person name="Li S."/>
            <person name="Dong L."/>
            <person name="Huang Y."/>
            <person name="Li L."/>
            <person name="Xi Y."/>
            <person name="Qi Q."/>
            <person name="Li W."/>
            <person name="Zhang B."/>
            <person name="Hu W."/>
            <person name="Zhang Y."/>
            <person name="Tian X."/>
            <person name="Jiao Y."/>
            <person name="Liang X."/>
            <person name="Jin J."/>
            <person name="Gao L."/>
            <person name="Zheng W."/>
            <person name="Hao B."/>
            <person name="Liu S.-M."/>
            <person name="Wang W."/>
            <person name="Yuan L."/>
            <person name="Cao M."/>
            <person name="McDermott J."/>
            <person name="Samudrala R."/>
            <person name="Wang J."/>
            <person name="Wong G.K.-S."/>
            <person name="Yang H."/>
        </authorList>
    </citation>
    <scope>NUCLEOTIDE SEQUENCE [LARGE SCALE GENOMIC DNA]</scope>
    <source>
        <strain>cv. Nipponbare</strain>
    </source>
</reference>
<reference key="5">
    <citation type="journal article" date="2009" name="Ann. Bot.">
        <title>Evaluating the microtubule cytoskeleton and its interacting proteins in monocots by mining the rice genome.</title>
        <authorList>
            <person name="Guo L."/>
            <person name="Ho C.M."/>
            <person name="Kong Z."/>
            <person name="Lee Y.R."/>
            <person name="Qian Q."/>
            <person name="Liu B."/>
        </authorList>
    </citation>
    <scope>GENE FAMILY</scope>
    <scope>NOMENCLATURE</scope>
</reference>